<reference key="1">
    <citation type="journal article" date="1993" name="J. Bacteriol.">
        <title>Cloning, nucleotide sequence, and regulation of the Bacillus subtilis pbpE operon, which codes for penicillin-binding protein 4* and an apparent amino acid racemase.</title>
        <authorList>
            <person name="Popham D.L."/>
            <person name="Setlow P.L."/>
        </authorList>
    </citation>
    <scope>NUCLEOTIDE SEQUENCE [GENOMIC DNA]</scope>
    <scope>FUNCTION</scope>
    <scope>DEVELOPMENTAL STAGE</scope>
</reference>
<reference key="2">
    <citation type="submission" date="1997-04" db="EMBL/GenBank/DDBJ databases">
        <authorList>
            <person name="Denizot F."/>
        </authorList>
    </citation>
    <scope>NUCLEOTIDE SEQUENCE [GENOMIC DNA]</scope>
    <source>
        <strain>168</strain>
    </source>
</reference>
<reference key="3">
    <citation type="journal article" date="1997" name="Nature">
        <title>The complete genome sequence of the Gram-positive bacterium Bacillus subtilis.</title>
        <authorList>
            <person name="Kunst F."/>
            <person name="Ogasawara N."/>
            <person name="Moszer I."/>
            <person name="Albertini A.M."/>
            <person name="Alloni G."/>
            <person name="Azevedo V."/>
            <person name="Bertero M.G."/>
            <person name="Bessieres P."/>
            <person name="Bolotin A."/>
            <person name="Borchert S."/>
            <person name="Borriss R."/>
            <person name="Boursier L."/>
            <person name="Brans A."/>
            <person name="Braun M."/>
            <person name="Brignell S.C."/>
            <person name="Bron S."/>
            <person name="Brouillet S."/>
            <person name="Bruschi C.V."/>
            <person name="Caldwell B."/>
            <person name="Capuano V."/>
            <person name="Carter N.M."/>
            <person name="Choi S.-K."/>
            <person name="Codani J.-J."/>
            <person name="Connerton I.F."/>
            <person name="Cummings N.J."/>
            <person name="Daniel R.A."/>
            <person name="Denizot F."/>
            <person name="Devine K.M."/>
            <person name="Duesterhoeft A."/>
            <person name="Ehrlich S.D."/>
            <person name="Emmerson P.T."/>
            <person name="Entian K.-D."/>
            <person name="Errington J."/>
            <person name="Fabret C."/>
            <person name="Ferrari E."/>
            <person name="Foulger D."/>
            <person name="Fritz C."/>
            <person name="Fujita M."/>
            <person name="Fujita Y."/>
            <person name="Fuma S."/>
            <person name="Galizzi A."/>
            <person name="Galleron N."/>
            <person name="Ghim S.-Y."/>
            <person name="Glaser P."/>
            <person name="Goffeau A."/>
            <person name="Golightly E.J."/>
            <person name="Grandi G."/>
            <person name="Guiseppi G."/>
            <person name="Guy B.J."/>
            <person name="Haga K."/>
            <person name="Haiech J."/>
            <person name="Harwood C.R."/>
            <person name="Henaut A."/>
            <person name="Hilbert H."/>
            <person name="Holsappel S."/>
            <person name="Hosono S."/>
            <person name="Hullo M.-F."/>
            <person name="Itaya M."/>
            <person name="Jones L.-M."/>
            <person name="Joris B."/>
            <person name="Karamata D."/>
            <person name="Kasahara Y."/>
            <person name="Klaerr-Blanchard M."/>
            <person name="Klein C."/>
            <person name="Kobayashi Y."/>
            <person name="Koetter P."/>
            <person name="Koningstein G."/>
            <person name="Krogh S."/>
            <person name="Kumano M."/>
            <person name="Kurita K."/>
            <person name="Lapidus A."/>
            <person name="Lardinois S."/>
            <person name="Lauber J."/>
            <person name="Lazarevic V."/>
            <person name="Lee S.-M."/>
            <person name="Levine A."/>
            <person name="Liu H."/>
            <person name="Masuda S."/>
            <person name="Mauel C."/>
            <person name="Medigue C."/>
            <person name="Medina N."/>
            <person name="Mellado R.P."/>
            <person name="Mizuno M."/>
            <person name="Moestl D."/>
            <person name="Nakai S."/>
            <person name="Noback M."/>
            <person name="Noone D."/>
            <person name="O'Reilly M."/>
            <person name="Ogawa K."/>
            <person name="Ogiwara A."/>
            <person name="Oudega B."/>
            <person name="Park S.-H."/>
            <person name="Parro V."/>
            <person name="Pohl T.M."/>
            <person name="Portetelle D."/>
            <person name="Porwollik S."/>
            <person name="Prescott A.M."/>
            <person name="Presecan E."/>
            <person name="Pujic P."/>
            <person name="Purnelle B."/>
            <person name="Rapoport G."/>
            <person name="Rey M."/>
            <person name="Reynolds S."/>
            <person name="Rieger M."/>
            <person name="Rivolta C."/>
            <person name="Rocha E."/>
            <person name="Roche B."/>
            <person name="Rose M."/>
            <person name="Sadaie Y."/>
            <person name="Sato T."/>
            <person name="Scanlan E."/>
            <person name="Schleich S."/>
            <person name="Schroeter R."/>
            <person name="Scoffone F."/>
            <person name="Sekiguchi J."/>
            <person name="Sekowska A."/>
            <person name="Seror S.J."/>
            <person name="Serror P."/>
            <person name="Shin B.-S."/>
            <person name="Soldo B."/>
            <person name="Sorokin A."/>
            <person name="Tacconi E."/>
            <person name="Takagi T."/>
            <person name="Takahashi H."/>
            <person name="Takemaru K."/>
            <person name="Takeuchi M."/>
            <person name="Tamakoshi A."/>
            <person name="Tanaka T."/>
            <person name="Terpstra P."/>
            <person name="Tognoni A."/>
            <person name="Tosato V."/>
            <person name="Uchiyama S."/>
            <person name="Vandenbol M."/>
            <person name="Vannier F."/>
            <person name="Vassarotti A."/>
            <person name="Viari A."/>
            <person name="Wambutt R."/>
            <person name="Wedler E."/>
            <person name="Wedler H."/>
            <person name="Weitzenegger T."/>
            <person name="Winters P."/>
            <person name="Wipat A."/>
            <person name="Yamamoto H."/>
            <person name="Yamane K."/>
            <person name="Yasumoto K."/>
            <person name="Yata K."/>
            <person name="Yoshida K."/>
            <person name="Yoshikawa H.-F."/>
            <person name="Zumstein E."/>
            <person name="Yoshikawa H."/>
            <person name="Danchin A."/>
        </authorList>
    </citation>
    <scope>NUCLEOTIDE SEQUENCE [LARGE SCALE GENOMIC DNA]</scope>
    <source>
        <strain>168</strain>
    </source>
</reference>
<reference key="4">
    <citation type="journal article" date="2017" name="Amino Acids">
        <title>Identification and characterization of novel broad-spectrum amino acid racemases from Escherichia coli and Bacillus subtilis.</title>
        <authorList>
            <person name="Miyamoto T."/>
            <person name="Katane M."/>
            <person name="Saitoh Y."/>
            <person name="Sekine M."/>
            <person name="Homma H."/>
        </authorList>
    </citation>
    <scope>FUNCTION</scope>
    <scope>CATALYTIC ACTIVITY</scope>
    <scope>BIOPHYSICOCHEMICAL PROPERTIES</scope>
    <scope>SUBUNIT</scope>
    <source>
        <strain>168</strain>
    </source>
</reference>
<comment type="function">
    <text evidence="2 3">Amino-acid racemase able to utilize a broad range of substrates. Preferentially catalyzes the epimerization of LL-diaminopimelate, as well as the racemization of D-lysine, L-arginine, L-ornithine, L-lysine and D-arginine. Has lower activity against D-ornithine, L-histidine, L-alanine, L-tyrosine, L-phenylalanine, L-serine, L-glutamine, L-methionine, L-asparagine and L-homoserine. Has weak activity against L-norleucine, L-aminobutyric acid and L-norvaline. Has no activity toward nine L-amino acids (Thr, Glu, Asp, Val, Leu, Ile, Trp, Cit and Aad) (PubMed:28894939). D-amino acids might be used as components of peptidoglycan and/or be involved in peptidoglycan metabolism and remodeling (PubMed:28894939, PubMed:8491712).</text>
</comment>
<comment type="catalytic activity">
    <reaction evidence="2">
        <text>an L-alpha-amino acid = a D-alpha-amino acid</text>
        <dbReference type="Rhea" id="RHEA:18317"/>
        <dbReference type="ChEBI" id="CHEBI:59869"/>
        <dbReference type="ChEBI" id="CHEBI:59871"/>
        <dbReference type="EC" id="5.1.1.10"/>
    </reaction>
</comment>
<comment type="catalytic activity">
    <reaction evidence="2">
        <text>(2S,6S)-2,6-diaminopimelate = meso-2,6-diaminopimelate</text>
        <dbReference type="Rhea" id="RHEA:15393"/>
        <dbReference type="ChEBI" id="CHEBI:57609"/>
        <dbReference type="ChEBI" id="CHEBI:57791"/>
    </reaction>
</comment>
<comment type="catalytic activity">
    <reaction evidence="2">
        <text>L-lysine = D-lysine</text>
        <dbReference type="Rhea" id="RHEA:22864"/>
        <dbReference type="ChEBI" id="CHEBI:32551"/>
        <dbReference type="ChEBI" id="CHEBI:32557"/>
    </reaction>
</comment>
<comment type="catalytic activity">
    <reaction evidence="2">
        <text>L-arginine = D-arginine</text>
        <dbReference type="Rhea" id="RHEA:18069"/>
        <dbReference type="ChEBI" id="CHEBI:32682"/>
        <dbReference type="ChEBI" id="CHEBI:32689"/>
    </reaction>
</comment>
<comment type="catalytic activity">
    <reaction evidence="2">
        <text>L-ornithine = D-ornithine</text>
        <dbReference type="Rhea" id="RHEA:11584"/>
        <dbReference type="ChEBI" id="CHEBI:46911"/>
        <dbReference type="ChEBI" id="CHEBI:57668"/>
    </reaction>
</comment>
<comment type="catalytic activity">
    <reaction evidence="2">
        <text>L-histidine = D-histidine</text>
        <dbReference type="Rhea" id="RHEA:59188"/>
        <dbReference type="ChEBI" id="CHEBI:57595"/>
        <dbReference type="ChEBI" id="CHEBI:142967"/>
    </reaction>
</comment>
<comment type="catalytic activity">
    <reaction evidence="2">
        <text>L-alanine = D-alanine</text>
        <dbReference type="Rhea" id="RHEA:20249"/>
        <dbReference type="ChEBI" id="CHEBI:57416"/>
        <dbReference type="ChEBI" id="CHEBI:57972"/>
    </reaction>
</comment>
<comment type="catalytic activity">
    <reaction evidence="2">
        <text>L-tyrosine = D-tyrosine</text>
        <dbReference type="Rhea" id="RHEA:59808"/>
        <dbReference type="ChEBI" id="CHEBI:58315"/>
        <dbReference type="ChEBI" id="CHEBI:58570"/>
    </reaction>
</comment>
<comment type="catalytic activity">
    <reaction evidence="2">
        <text>L-phenylalanine = D-phenylalanine</text>
        <dbReference type="Rhea" id="RHEA:59804"/>
        <dbReference type="ChEBI" id="CHEBI:57981"/>
        <dbReference type="ChEBI" id="CHEBI:58095"/>
    </reaction>
</comment>
<comment type="catalytic activity">
    <reaction evidence="2">
        <text>L-serine = D-serine</text>
        <dbReference type="Rhea" id="RHEA:10980"/>
        <dbReference type="ChEBI" id="CHEBI:33384"/>
        <dbReference type="ChEBI" id="CHEBI:35247"/>
    </reaction>
</comment>
<comment type="catalytic activity">
    <reaction evidence="2">
        <text>L-glutamine = D-glutamine</text>
        <dbReference type="Rhea" id="RHEA:59276"/>
        <dbReference type="ChEBI" id="CHEBI:58000"/>
        <dbReference type="ChEBI" id="CHEBI:58359"/>
    </reaction>
</comment>
<comment type="catalytic activity">
    <reaction evidence="2">
        <text>L-methionine = D-methionine</text>
        <dbReference type="Rhea" id="RHEA:12492"/>
        <dbReference type="ChEBI" id="CHEBI:57844"/>
        <dbReference type="ChEBI" id="CHEBI:57932"/>
    </reaction>
</comment>
<comment type="catalytic activity">
    <reaction evidence="2">
        <text>L-asparagine = D-asparagine</text>
        <dbReference type="Rhea" id="RHEA:59280"/>
        <dbReference type="ChEBI" id="CHEBI:58048"/>
        <dbReference type="ChEBI" id="CHEBI:74337"/>
    </reaction>
</comment>
<comment type="catalytic activity">
    <reaction evidence="2">
        <text>L-homoserine = D-homoserine</text>
        <dbReference type="Rhea" id="RHEA:59404"/>
        <dbReference type="ChEBI" id="CHEBI:57476"/>
        <dbReference type="ChEBI" id="CHEBI:143081"/>
    </reaction>
</comment>
<comment type="biophysicochemical properties">
    <kinetics>
        <KM evidence="2">27.9 mM for L-lysine</KM>
        <KM evidence="2">69.3 mM for D-lysine</KM>
        <Vmax evidence="2">2.99 nmol/min/mg enzyme with L-lysine as substrate</Vmax>
        <Vmax evidence="2">8.42 nmol/min/mg enzyme with D-lysine as substrate</Vmax>
        <text evidence="2">kcat is 0.08 min(-1) with L-lysine as substrate. kcat is 0.224 min(-1) with D-lysine as substrate.</text>
    </kinetics>
    <phDependence>
        <text evidence="2">Optimum pH is 8.5 with L-lysine as substrate.</text>
    </phDependence>
    <temperatureDependence>
        <text evidence="2">Optimum temperature is 37 degrees Celsius.</text>
    </temperatureDependence>
</comment>
<comment type="subunit">
    <text evidence="2">Homodimer.</text>
</comment>
<comment type="developmental stage">
    <text evidence="3">Weakly expressed during vegetative growth and significantly induced at the onset of sporulation.</text>
</comment>
<comment type="similarity">
    <text evidence="4">Belongs to the aspartate/glutamate racemases family.</text>
</comment>
<comment type="sequence caution" evidence="4">
    <conflict type="erroneous initiation">
        <sequence resource="EMBL-CDS" id="AAA22641"/>
    </conflict>
</comment>
<name>RACX_BACSU</name>
<sequence>MIGILAGMGPKSTSPFIDKVIDYCQKLYGASNDIDYPHMMIYSCPTPFYADRPIDHDEMKKAIIDGAVKLEKTGVDFIALPCNTAHVYYEEIQQALSVPMLHIVEETIKEIPHPAKKAVVLGTEPTIQSAIYQKVLKGNGQEVIHKDHWQQAVNQLIAAIKQPNHMQHTQALWQTLYEEISQHADIIISACTDLNAVLDHIQSEIPIIDSSACLAKSTVSTYLAYQS</sequence>
<proteinExistence type="evidence at protein level"/>
<dbReference type="EC" id="5.1.1.10" evidence="2"/>
<dbReference type="EMBL" id="L10629">
    <property type="protein sequence ID" value="AAA22641.1"/>
    <property type="status" value="ALT_INIT"/>
    <property type="molecule type" value="Genomic_DNA"/>
</dbReference>
<dbReference type="EMBL" id="Z94043">
    <property type="protein sequence ID" value="CAB08017.1"/>
    <property type="molecule type" value="Genomic_DNA"/>
</dbReference>
<dbReference type="EMBL" id="AL009126">
    <property type="protein sequence ID" value="CAB15448.1"/>
    <property type="molecule type" value="Genomic_DNA"/>
</dbReference>
<dbReference type="PIR" id="B36908">
    <property type="entry name" value="B36908"/>
</dbReference>
<dbReference type="RefSeq" id="NP_391323.1">
    <property type="nucleotide sequence ID" value="NC_000964.3"/>
</dbReference>
<dbReference type="RefSeq" id="WP_003244427.1">
    <property type="nucleotide sequence ID" value="NZ_OZ025638.1"/>
</dbReference>
<dbReference type="SMR" id="P32960"/>
<dbReference type="FunCoup" id="P32960">
    <property type="interactions" value="125"/>
</dbReference>
<dbReference type="STRING" id="224308.BSU34430"/>
<dbReference type="PaxDb" id="224308-BSU34430"/>
<dbReference type="EnsemblBacteria" id="CAB15448">
    <property type="protein sequence ID" value="CAB15448"/>
    <property type="gene ID" value="BSU_34430"/>
</dbReference>
<dbReference type="GeneID" id="938575"/>
<dbReference type="KEGG" id="bsu:BSU34430"/>
<dbReference type="PATRIC" id="fig|224308.179.peg.3730"/>
<dbReference type="eggNOG" id="COG1794">
    <property type="taxonomic scope" value="Bacteria"/>
</dbReference>
<dbReference type="InParanoid" id="P32960"/>
<dbReference type="OrthoDB" id="9803739at2"/>
<dbReference type="PhylomeDB" id="P32960"/>
<dbReference type="BioCyc" id="BSUB:BSU34430-MONOMER"/>
<dbReference type="BRENDA" id="5.1.1.10">
    <property type="organism ID" value="658"/>
</dbReference>
<dbReference type="SABIO-RK" id="P32960"/>
<dbReference type="Proteomes" id="UP000001570">
    <property type="component" value="Chromosome"/>
</dbReference>
<dbReference type="GO" id="GO:0008784">
    <property type="term" value="F:alanine racemase activity"/>
    <property type="evidence" value="ECO:0007669"/>
    <property type="project" value="RHEA"/>
</dbReference>
<dbReference type="GO" id="GO:0047679">
    <property type="term" value="F:arginine racemase activity"/>
    <property type="evidence" value="ECO:0007669"/>
    <property type="project" value="RHEA"/>
</dbReference>
<dbReference type="GO" id="GO:0008837">
    <property type="term" value="F:diaminopimelate epimerase activity"/>
    <property type="evidence" value="ECO:0007669"/>
    <property type="project" value="RHEA"/>
</dbReference>
<dbReference type="GO" id="GO:0018113">
    <property type="term" value="F:lysine racemase activity"/>
    <property type="evidence" value="ECO:0007669"/>
    <property type="project" value="RHEA"/>
</dbReference>
<dbReference type="GO" id="GO:0018111">
    <property type="term" value="F:methionine racemase activity"/>
    <property type="evidence" value="ECO:0007669"/>
    <property type="project" value="RHEA"/>
</dbReference>
<dbReference type="GO" id="GO:0050157">
    <property type="term" value="F:ornithine racemase activity"/>
    <property type="evidence" value="ECO:0007669"/>
    <property type="project" value="RHEA"/>
</dbReference>
<dbReference type="GO" id="GO:0030378">
    <property type="term" value="F:serine racemase activity"/>
    <property type="evidence" value="ECO:0007669"/>
    <property type="project" value="RHEA"/>
</dbReference>
<dbReference type="GO" id="GO:0030435">
    <property type="term" value="P:sporulation resulting in formation of a cellular spore"/>
    <property type="evidence" value="ECO:0007669"/>
    <property type="project" value="UniProtKB-KW"/>
</dbReference>
<dbReference type="Gene3D" id="3.40.50.1860">
    <property type="match status" value="2"/>
</dbReference>
<dbReference type="InterPro" id="IPR015942">
    <property type="entry name" value="Asp/Glu/hydantoin_racemase"/>
</dbReference>
<dbReference type="InterPro" id="IPR001920">
    <property type="entry name" value="Asp/Glu_race"/>
</dbReference>
<dbReference type="InterPro" id="IPR018187">
    <property type="entry name" value="Asp/Glu_racemase_AS_1"/>
</dbReference>
<dbReference type="InterPro" id="IPR033134">
    <property type="entry name" value="Asp/Glu_racemase_AS_2"/>
</dbReference>
<dbReference type="InterPro" id="IPR004380">
    <property type="entry name" value="Asp_race"/>
</dbReference>
<dbReference type="NCBIfam" id="TIGR00035">
    <property type="entry name" value="asp_race"/>
    <property type="match status" value="1"/>
</dbReference>
<dbReference type="PANTHER" id="PTHR21198:SF7">
    <property type="entry name" value="ASPARTATE-GLUTAMATE RACEMASE FAMILY"/>
    <property type="match status" value="1"/>
</dbReference>
<dbReference type="PANTHER" id="PTHR21198">
    <property type="entry name" value="GLUTAMATE RACEMASE"/>
    <property type="match status" value="1"/>
</dbReference>
<dbReference type="Pfam" id="PF01177">
    <property type="entry name" value="Asp_Glu_race"/>
    <property type="match status" value="1"/>
</dbReference>
<dbReference type="SUPFAM" id="SSF53681">
    <property type="entry name" value="Aspartate/glutamate racemase"/>
    <property type="match status" value="2"/>
</dbReference>
<dbReference type="PROSITE" id="PS00923">
    <property type="entry name" value="ASP_GLU_RACEMASE_1"/>
    <property type="match status" value="1"/>
</dbReference>
<dbReference type="PROSITE" id="PS00924">
    <property type="entry name" value="ASP_GLU_RACEMASE_2"/>
    <property type="match status" value="1"/>
</dbReference>
<protein>
    <recommendedName>
        <fullName evidence="4">Broad specificity amino-acid racemase RacX</fullName>
        <ecNumber evidence="2">5.1.1.10</ecNumber>
    </recommendedName>
</protein>
<feature type="chain" id="PRO_0000095536" description="Broad specificity amino-acid racemase RacX">
    <location>
        <begin position="1"/>
        <end position="227"/>
    </location>
</feature>
<feature type="active site" description="Proton donor/acceptor" evidence="1">
    <location>
        <position position="82"/>
    </location>
</feature>
<feature type="active site" description="Proton donor/acceptor" evidence="1">
    <location>
        <position position="191"/>
    </location>
</feature>
<feature type="binding site" evidence="1">
    <location>
        <begin position="51"/>
        <end position="53"/>
    </location>
    <ligand>
        <name>substrate</name>
    </ligand>
</feature>
<feature type="binding site" evidence="1">
    <location>
        <begin position="83"/>
        <end position="85"/>
    </location>
    <ligand>
        <name>substrate</name>
    </ligand>
</feature>
<feature type="binding site" evidence="1">
    <location>
        <position position="161"/>
    </location>
    <ligand>
        <name>substrate</name>
    </ligand>
</feature>
<organism>
    <name type="scientific">Bacillus subtilis (strain 168)</name>
    <dbReference type="NCBI Taxonomy" id="224308"/>
    <lineage>
        <taxon>Bacteria</taxon>
        <taxon>Bacillati</taxon>
        <taxon>Bacillota</taxon>
        <taxon>Bacilli</taxon>
        <taxon>Bacillales</taxon>
        <taxon>Bacillaceae</taxon>
        <taxon>Bacillus</taxon>
    </lineage>
</organism>
<keyword id="KW-0413">Isomerase</keyword>
<keyword id="KW-1185">Reference proteome</keyword>
<keyword id="KW-0749">Sporulation</keyword>
<evidence type="ECO:0000250" key="1">
    <source>
        <dbReference type="UniProtKB" id="O58403"/>
    </source>
</evidence>
<evidence type="ECO:0000269" key="2">
    <source>
    </source>
</evidence>
<evidence type="ECO:0000269" key="3">
    <source>
    </source>
</evidence>
<evidence type="ECO:0000305" key="4"/>
<gene>
    <name type="primary">racX</name>
    <name type="ordered locus">BSU34430</name>
</gene>
<accession>P32960</accession>